<sequence length="201" mass="21726">MQTSPLLETLMEALRCLPGVGPKSAQRMAFQLLQRDRSGGMRLAQALTRAMSEIGHCADCRTFTEQDICTICANPRRQQNGQICVVESPADIHAIEQTGQFAGRYFVLMGHLSPMDGIGPGDIGLDRLEQRLEKESVTEVILATNPTVEGDATANYIAEMCGQYGVVASRIAHGVPVGGELEMVDGTTLSHSLAGRHVIKF</sequence>
<organism>
    <name type="scientific">Serratia proteamaculans (strain 568)</name>
    <dbReference type="NCBI Taxonomy" id="399741"/>
    <lineage>
        <taxon>Bacteria</taxon>
        <taxon>Pseudomonadati</taxon>
        <taxon>Pseudomonadota</taxon>
        <taxon>Gammaproteobacteria</taxon>
        <taxon>Enterobacterales</taxon>
        <taxon>Yersiniaceae</taxon>
        <taxon>Serratia</taxon>
    </lineage>
</organism>
<dbReference type="EMBL" id="CP000826">
    <property type="protein sequence ID" value="ABV40241.1"/>
    <property type="molecule type" value="Genomic_DNA"/>
</dbReference>
<dbReference type="SMR" id="A8GAV1"/>
<dbReference type="STRING" id="399741.Spro_1137"/>
<dbReference type="KEGG" id="spe:Spro_1137"/>
<dbReference type="eggNOG" id="COG0353">
    <property type="taxonomic scope" value="Bacteria"/>
</dbReference>
<dbReference type="HOGENOM" id="CLU_060739_1_2_6"/>
<dbReference type="OrthoDB" id="9802672at2"/>
<dbReference type="GO" id="GO:0003677">
    <property type="term" value="F:DNA binding"/>
    <property type="evidence" value="ECO:0007669"/>
    <property type="project" value="UniProtKB-UniRule"/>
</dbReference>
<dbReference type="GO" id="GO:0008270">
    <property type="term" value="F:zinc ion binding"/>
    <property type="evidence" value="ECO:0007669"/>
    <property type="project" value="UniProtKB-KW"/>
</dbReference>
<dbReference type="GO" id="GO:0006310">
    <property type="term" value="P:DNA recombination"/>
    <property type="evidence" value="ECO:0007669"/>
    <property type="project" value="UniProtKB-UniRule"/>
</dbReference>
<dbReference type="GO" id="GO:0006281">
    <property type="term" value="P:DNA repair"/>
    <property type="evidence" value="ECO:0007669"/>
    <property type="project" value="UniProtKB-UniRule"/>
</dbReference>
<dbReference type="CDD" id="cd01025">
    <property type="entry name" value="TOPRIM_recR"/>
    <property type="match status" value="1"/>
</dbReference>
<dbReference type="FunFam" id="1.10.8.420:FF:000001">
    <property type="entry name" value="Recombination protein RecR"/>
    <property type="match status" value="1"/>
</dbReference>
<dbReference type="FunFam" id="3.40.1360.10:FF:000001">
    <property type="entry name" value="Recombination protein RecR"/>
    <property type="match status" value="1"/>
</dbReference>
<dbReference type="Gene3D" id="3.40.1360.10">
    <property type="match status" value="1"/>
</dbReference>
<dbReference type="Gene3D" id="6.10.250.240">
    <property type="match status" value="1"/>
</dbReference>
<dbReference type="Gene3D" id="1.10.8.420">
    <property type="entry name" value="RecR Domain 1"/>
    <property type="match status" value="1"/>
</dbReference>
<dbReference type="HAMAP" id="MF_00017">
    <property type="entry name" value="RecR"/>
    <property type="match status" value="1"/>
</dbReference>
<dbReference type="InterPro" id="IPR000093">
    <property type="entry name" value="DNA_Rcmb_RecR"/>
</dbReference>
<dbReference type="InterPro" id="IPR023627">
    <property type="entry name" value="Rcmb_RecR"/>
</dbReference>
<dbReference type="InterPro" id="IPR015967">
    <property type="entry name" value="Rcmb_RecR_Znf"/>
</dbReference>
<dbReference type="InterPro" id="IPR006171">
    <property type="entry name" value="TOPRIM_dom"/>
</dbReference>
<dbReference type="InterPro" id="IPR034137">
    <property type="entry name" value="TOPRIM_RecR"/>
</dbReference>
<dbReference type="NCBIfam" id="TIGR00615">
    <property type="entry name" value="recR"/>
    <property type="match status" value="1"/>
</dbReference>
<dbReference type="PANTHER" id="PTHR30446">
    <property type="entry name" value="RECOMBINATION PROTEIN RECR"/>
    <property type="match status" value="1"/>
</dbReference>
<dbReference type="PANTHER" id="PTHR30446:SF0">
    <property type="entry name" value="RECOMBINATION PROTEIN RECR"/>
    <property type="match status" value="1"/>
</dbReference>
<dbReference type="Pfam" id="PF21175">
    <property type="entry name" value="RecR_C"/>
    <property type="match status" value="1"/>
</dbReference>
<dbReference type="Pfam" id="PF21176">
    <property type="entry name" value="RecR_HhH"/>
    <property type="match status" value="1"/>
</dbReference>
<dbReference type="Pfam" id="PF02132">
    <property type="entry name" value="RecR_ZnF"/>
    <property type="match status" value="1"/>
</dbReference>
<dbReference type="Pfam" id="PF13662">
    <property type="entry name" value="Toprim_4"/>
    <property type="match status" value="1"/>
</dbReference>
<dbReference type="SMART" id="SM00493">
    <property type="entry name" value="TOPRIM"/>
    <property type="match status" value="1"/>
</dbReference>
<dbReference type="SUPFAM" id="SSF111304">
    <property type="entry name" value="Recombination protein RecR"/>
    <property type="match status" value="1"/>
</dbReference>
<dbReference type="PROSITE" id="PS01300">
    <property type="entry name" value="RECR"/>
    <property type="match status" value="1"/>
</dbReference>
<dbReference type="PROSITE" id="PS50880">
    <property type="entry name" value="TOPRIM"/>
    <property type="match status" value="1"/>
</dbReference>
<protein>
    <recommendedName>
        <fullName evidence="1">Recombination protein RecR</fullName>
    </recommendedName>
</protein>
<evidence type="ECO:0000255" key="1">
    <source>
        <dbReference type="HAMAP-Rule" id="MF_00017"/>
    </source>
</evidence>
<name>RECR_SERP5</name>
<feature type="chain" id="PRO_1000057158" description="Recombination protein RecR">
    <location>
        <begin position="1"/>
        <end position="201"/>
    </location>
</feature>
<feature type="domain" description="Toprim" evidence="1">
    <location>
        <begin position="81"/>
        <end position="176"/>
    </location>
</feature>
<feature type="zinc finger region" description="C4-type" evidence="1">
    <location>
        <begin position="57"/>
        <end position="72"/>
    </location>
</feature>
<comment type="function">
    <text evidence="1">May play a role in DNA repair. It seems to be involved in an RecBC-independent recombinational process of DNA repair. It may act with RecF and RecO.</text>
</comment>
<comment type="similarity">
    <text evidence="1">Belongs to the RecR family.</text>
</comment>
<gene>
    <name evidence="1" type="primary">recR</name>
    <name type="ordered locus">Spro_1137</name>
</gene>
<reference key="1">
    <citation type="submission" date="2007-09" db="EMBL/GenBank/DDBJ databases">
        <title>Complete sequence of chromosome of Serratia proteamaculans 568.</title>
        <authorList>
            <consortium name="US DOE Joint Genome Institute"/>
            <person name="Copeland A."/>
            <person name="Lucas S."/>
            <person name="Lapidus A."/>
            <person name="Barry K."/>
            <person name="Glavina del Rio T."/>
            <person name="Dalin E."/>
            <person name="Tice H."/>
            <person name="Pitluck S."/>
            <person name="Chain P."/>
            <person name="Malfatti S."/>
            <person name="Shin M."/>
            <person name="Vergez L."/>
            <person name="Schmutz J."/>
            <person name="Larimer F."/>
            <person name="Land M."/>
            <person name="Hauser L."/>
            <person name="Kyrpides N."/>
            <person name="Kim E."/>
            <person name="Taghavi S."/>
            <person name="Newman L."/>
            <person name="Vangronsveld J."/>
            <person name="van der Lelie D."/>
            <person name="Richardson P."/>
        </authorList>
    </citation>
    <scope>NUCLEOTIDE SEQUENCE [LARGE SCALE GENOMIC DNA]</scope>
    <source>
        <strain>568</strain>
    </source>
</reference>
<accession>A8GAV1</accession>
<keyword id="KW-0227">DNA damage</keyword>
<keyword id="KW-0233">DNA recombination</keyword>
<keyword id="KW-0234">DNA repair</keyword>
<keyword id="KW-0479">Metal-binding</keyword>
<keyword id="KW-0862">Zinc</keyword>
<keyword id="KW-0863">Zinc-finger</keyword>
<proteinExistence type="inferred from homology"/>